<accession>B9E6Q6</accession>
<feature type="chain" id="PRO_1000132938" description="1-deoxy-D-xylulose-5-phosphate synthase">
    <location>
        <begin position="1"/>
        <end position="627"/>
    </location>
</feature>
<feature type="binding site" evidence="1">
    <location>
        <position position="72"/>
    </location>
    <ligand>
        <name>thiamine diphosphate</name>
        <dbReference type="ChEBI" id="CHEBI:58937"/>
    </ligand>
</feature>
<feature type="binding site" evidence="1">
    <location>
        <begin position="113"/>
        <end position="115"/>
    </location>
    <ligand>
        <name>thiamine diphosphate</name>
        <dbReference type="ChEBI" id="CHEBI:58937"/>
    </ligand>
</feature>
<feature type="binding site" evidence="1">
    <location>
        <position position="144"/>
    </location>
    <ligand>
        <name>Mg(2+)</name>
        <dbReference type="ChEBI" id="CHEBI:18420"/>
    </ligand>
</feature>
<feature type="binding site" evidence="1">
    <location>
        <begin position="145"/>
        <end position="146"/>
    </location>
    <ligand>
        <name>thiamine diphosphate</name>
        <dbReference type="ChEBI" id="CHEBI:58937"/>
    </ligand>
</feature>
<feature type="binding site" evidence="1">
    <location>
        <position position="173"/>
    </location>
    <ligand>
        <name>Mg(2+)</name>
        <dbReference type="ChEBI" id="CHEBI:18420"/>
    </ligand>
</feature>
<feature type="binding site" evidence="1">
    <location>
        <position position="173"/>
    </location>
    <ligand>
        <name>thiamine diphosphate</name>
        <dbReference type="ChEBI" id="CHEBI:58937"/>
    </ligand>
</feature>
<feature type="binding site" evidence="1">
    <location>
        <position position="283"/>
    </location>
    <ligand>
        <name>thiamine diphosphate</name>
        <dbReference type="ChEBI" id="CHEBI:58937"/>
    </ligand>
</feature>
<feature type="binding site" evidence="1">
    <location>
        <position position="366"/>
    </location>
    <ligand>
        <name>thiamine diphosphate</name>
        <dbReference type="ChEBI" id="CHEBI:58937"/>
    </ligand>
</feature>
<evidence type="ECO:0000255" key="1">
    <source>
        <dbReference type="HAMAP-Rule" id="MF_00315"/>
    </source>
</evidence>
<protein>
    <recommendedName>
        <fullName evidence="1">1-deoxy-D-xylulose-5-phosphate synthase</fullName>
        <ecNumber evidence="1">2.2.1.7</ecNumber>
    </recommendedName>
    <alternativeName>
        <fullName evidence="1">1-deoxyxylulose-5-phosphate synthase</fullName>
        <shortName evidence="1">DXP synthase</shortName>
        <shortName evidence="1">DXPS</shortName>
    </alternativeName>
</protein>
<reference key="1">
    <citation type="journal article" date="2009" name="J. Bacteriol.">
        <title>Complete genome sequence of Macrococcus caseolyticus strain JCSCS5402, reflecting the ancestral genome of the human-pathogenic staphylococci.</title>
        <authorList>
            <person name="Baba T."/>
            <person name="Kuwahara-Arai K."/>
            <person name="Uchiyama I."/>
            <person name="Takeuchi F."/>
            <person name="Ito T."/>
            <person name="Hiramatsu K."/>
        </authorList>
    </citation>
    <scope>NUCLEOTIDE SEQUENCE [LARGE SCALE GENOMIC DNA]</scope>
    <source>
        <strain>JCSC5402</strain>
    </source>
</reference>
<sequence length="627" mass="69416">MDVTKIKDPSFLKDLSYEELDGLSQDIRTFLIEKCAVTGGHIGANLGVVELTIALHKVFNSPKDKLIFDVGHQTYIHKILTGRAEQFDTLRQYKGLSGFPKLNESEHDVWEAGHSSTSLSAAMGMAKARDIQQQHYEVVPIIGDGALTGGMALEALNHIGHDKTNMTIILNDNEMSIAPNVGAMHNMFGRLRTNSNYNRAKSDIDLFLSKLPGGHKLRDSADRVKDSLKYLVVNGIFFEELGIKYIGPVDGHSYKELEEALLTSKRIDGPVIVHVITKKGKGYHPAENDKIGTWHGLGPYKLETGEVLKGSAQGPSWSQFFSDTVQSFAERDKTIAAITPAMPVGSKLTKFQKELPQQFFDVGIAEQHAVTMAAGMAANGMKPYVAIYSTFLQRAYDQMLHDVDRQNLHVVFGIDRSGLVGADGETHQGVFDISFLTHMPNMTVMMPKDENEAYHLLYNAFYEYEGPIAIRYPRGNGYGVKIDSIPNSVVRGDWEVLHEGTDVIVLSFGPTLKLIEAVREELLKEGVSIEVVNARFIKPLDYHYLAAAAKRNIPVLTVEEAMLSGGFGAAISNHYSDLDLDVHVKRIGIDDEYIEHGDVSMLLDDIGINKANLIHEIKQLAISHEES</sequence>
<keyword id="KW-0414">Isoprene biosynthesis</keyword>
<keyword id="KW-0460">Magnesium</keyword>
<keyword id="KW-0479">Metal-binding</keyword>
<keyword id="KW-1185">Reference proteome</keyword>
<keyword id="KW-0784">Thiamine biosynthesis</keyword>
<keyword id="KW-0786">Thiamine pyrophosphate</keyword>
<keyword id="KW-0808">Transferase</keyword>
<dbReference type="EC" id="2.2.1.7" evidence="1"/>
<dbReference type="EMBL" id="AP009484">
    <property type="protein sequence ID" value="BAH17874.1"/>
    <property type="molecule type" value="Genomic_DNA"/>
</dbReference>
<dbReference type="RefSeq" id="WP_012657072.1">
    <property type="nucleotide sequence ID" value="NC_011999.1"/>
</dbReference>
<dbReference type="SMR" id="B9E6Q6"/>
<dbReference type="STRING" id="458233.MCCL_1167"/>
<dbReference type="KEGG" id="mcl:MCCL_1167"/>
<dbReference type="eggNOG" id="COG1154">
    <property type="taxonomic scope" value="Bacteria"/>
</dbReference>
<dbReference type="HOGENOM" id="CLU_009227_1_4_9"/>
<dbReference type="OrthoDB" id="9803371at2"/>
<dbReference type="UniPathway" id="UPA00064">
    <property type="reaction ID" value="UER00091"/>
</dbReference>
<dbReference type="Proteomes" id="UP000001383">
    <property type="component" value="Chromosome"/>
</dbReference>
<dbReference type="GO" id="GO:0005829">
    <property type="term" value="C:cytosol"/>
    <property type="evidence" value="ECO:0007669"/>
    <property type="project" value="TreeGrafter"/>
</dbReference>
<dbReference type="GO" id="GO:0008661">
    <property type="term" value="F:1-deoxy-D-xylulose-5-phosphate synthase activity"/>
    <property type="evidence" value="ECO:0007669"/>
    <property type="project" value="UniProtKB-UniRule"/>
</dbReference>
<dbReference type="GO" id="GO:0000287">
    <property type="term" value="F:magnesium ion binding"/>
    <property type="evidence" value="ECO:0007669"/>
    <property type="project" value="UniProtKB-UniRule"/>
</dbReference>
<dbReference type="GO" id="GO:0030976">
    <property type="term" value="F:thiamine pyrophosphate binding"/>
    <property type="evidence" value="ECO:0007669"/>
    <property type="project" value="UniProtKB-UniRule"/>
</dbReference>
<dbReference type="GO" id="GO:0052865">
    <property type="term" value="P:1-deoxy-D-xylulose 5-phosphate biosynthetic process"/>
    <property type="evidence" value="ECO:0007669"/>
    <property type="project" value="UniProtKB-UniPathway"/>
</dbReference>
<dbReference type="GO" id="GO:0019288">
    <property type="term" value="P:isopentenyl diphosphate biosynthetic process, methylerythritol 4-phosphate pathway"/>
    <property type="evidence" value="ECO:0007669"/>
    <property type="project" value="TreeGrafter"/>
</dbReference>
<dbReference type="GO" id="GO:0016114">
    <property type="term" value="P:terpenoid biosynthetic process"/>
    <property type="evidence" value="ECO:0007669"/>
    <property type="project" value="UniProtKB-UniRule"/>
</dbReference>
<dbReference type="GO" id="GO:0009228">
    <property type="term" value="P:thiamine biosynthetic process"/>
    <property type="evidence" value="ECO:0007669"/>
    <property type="project" value="UniProtKB-UniRule"/>
</dbReference>
<dbReference type="CDD" id="cd02007">
    <property type="entry name" value="TPP_DXS"/>
    <property type="match status" value="1"/>
</dbReference>
<dbReference type="CDD" id="cd07033">
    <property type="entry name" value="TPP_PYR_DXS_TK_like"/>
    <property type="match status" value="1"/>
</dbReference>
<dbReference type="FunFam" id="3.40.50.970:FF:000030">
    <property type="entry name" value="1-deoxy-D-xylulose-5-phosphate synthase"/>
    <property type="match status" value="1"/>
</dbReference>
<dbReference type="Gene3D" id="3.40.50.920">
    <property type="match status" value="1"/>
</dbReference>
<dbReference type="Gene3D" id="3.40.50.970">
    <property type="match status" value="2"/>
</dbReference>
<dbReference type="HAMAP" id="MF_00315">
    <property type="entry name" value="DXP_synth"/>
    <property type="match status" value="1"/>
</dbReference>
<dbReference type="InterPro" id="IPR005477">
    <property type="entry name" value="Dxylulose-5-P_synthase"/>
</dbReference>
<dbReference type="InterPro" id="IPR029061">
    <property type="entry name" value="THDP-binding"/>
</dbReference>
<dbReference type="InterPro" id="IPR009014">
    <property type="entry name" value="Transketo_C/PFOR_II"/>
</dbReference>
<dbReference type="InterPro" id="IPR005475">
    <property type="entry name" value="Transketolase-like_Pyr-bd"/>
</dbReference>
<dbReference type="InterPro" id="IPR033248">
    <property type="entry name" value="Transketolase_C"/>
</dbReference>
<dbReference type="InterPro" id="IPR049557">
    <property type="entry name" value="Transketolase_CS"/>
</dbReference>
<dbReference type="NCBIfam" id="TIGR00204">
    <property type="entry name" value="dxs"/>
    <property type="match status" value="1"/>
</dbReference>
<dbReference type="NCBIfam" id="NF003933">
    <property type="entry name" value="PRK05444.2-2"/>
    <property type="match status" value="1"/>
</dbReference>
<dbReference type="PANTHER" id="PTHR43322">
    <property type="entry name" value="1-D-DEOXYXYLULOSE 5-PHOSPHATE SYNTHASE-RELATED"/>
    <property type="match status" value="1"/>
</dbReference>
<dbReference type="PANTHER" id="PTHR43322:SF5">
    <property type="entry name" value="1-DEOXY-D-XYLULOSE-5-PHOSPHATE SYNTHASE, CHLOROPLASTIC"/>
    <property type="match status" value="1"/>
</dbReference>
<dbReference type="Pfam" id="PF13292">
    <property type="entry name" value="DXP_synthase_N"/>
    <property type="match status" value="1"/>
</dbReference>
<dbReference type="Pfam" id="PF02779">
    <property type="entry name" value="Transket_pyr"/>
    <property type="match status" value="1"/>
</dbReference>
<dbReference type="Pfam" id="PF02780">
    <property type="entry name" value="Transketolase_C"/>
    <property type="match status" value="1"/>
</dbReference>
<dbReference type="SMART" id="SM00861">
    <property type="entry name" value="Transket_pyr"/>
    <property type="match status" value="1"/>
</dbReference>
<dbReference type="SUPFAM" id="SSF52518">
    <property type="entry name" value="Thiamin diphosphate-binding fold (THDP-binding)"/>
    <property type="match status" value="2"/>
</dbReference>
<dbReference type="SUPFAM" id="SSF52922">
    <property type="entry name" value="TK C-terminal domain-like"/>
    <property type="match status" value="1"/>
</dbReference>
<dbReference type="PROSITE" id="PS00801">
    <property type="entry name" value="TRANSKETOLASE_1"/>
    <property type="match status" value="1"/>
</dbReference>
<name>DXS_MACCJ</name>
<proteinExistence type="inferred from homology"/>
<organism>
    <name type="scientific">Macrococcus caseolyticus (strain JCSC5402)</name>
    <name type="common">Macrococcoides caseolyticum</name>
    <dbReference type="NCBI Taxonomy" id="458233"/>
    <lineage>
        <taxon>Bacteria</taxon>
        <taxon>Bacillati</taxon>
        <taxon>Bacillota</taxon>
        <taxon>Bacilli</taxon>
        <taxon>Bacillales</taxon>
        <taxon>Staphylococcaceae</taxon>
        <taxon>Macrococcoides</taxon>
    </lineage>
</organism>
<gene>
    <name evidence="1" type="primary">dxs</name>
    <name type="ordered locus">MCCL_1167</name>
</gene>
<comment type="function">
    <text evidence="1">Catalyzes the acyloin condensation reaction between C atoms 2 and 3 of pyruvate and glyceraldehyde 3-phosphate to yield 1-deoxy-D-xylulose-5-phosphate (DXP).</text>
</comment>
<comment type="catalytic activity">
    <reaction evidence="1">
        <text>D-glyceraldehyde 3-phosphate + pyruvate + H(+) = 1-deoxy-D-xylulose 5-phosphate + CO2</text>
        <dbReference type="Rhea" id="RHEA:12605"/>
        <dbReference type="ChEBI" id="CHEBI:15361"/>
        <dbReference type="ChEBI" id="CHEBI:15378"/>
        <dbReference type="ChEBI" id="CHEBI:16526"/>
        <dbReference type="ChEBI" id="CHEBI:57792"/>
        <dbReference type="ChEBI" id="CHEBI:59776"/>
        <dbReference type="EC" id="2.2.1.7"/>
    </reaction>
</comment>
<comment type="cofactor">
    <cofactor evidence="1">
        <name>Mg(2+)</name>
        <dbReference type="ChEBI" id="CHEBI:18420"/>
    </cofactor>
    <text evidence="1">Binds 1 Mg(2+) ion per subunit.</text>
</comment>
<comment type="cofactor">
    <cofactor evidence="1">
        <name>thiamine diphosphate</name>
        <dbReference type="ChEBI" id="CHEBI:58937"/>
    </cofactor>
    <text evidence="1">Binds 1 thiamine pyrophosphate per subunit.</text>
</comment>
<comment type="pathway">
    <text evidence="1">Metabolic intermediate biosynthesis; 1-deoxy-D-xylulose 5-phosphate biosynthesis; 1-deoxy-D-xylulose 5-phosphate from D-glyceraldehyde 3-phosphate and pyruvate: step 1/1.</text>
</comment>
<comment type="subunit">
    <text evidence="1">Homodimer.</text>
</comment>
<comment type="similarity">
    <text evidence="1">Belongs to the transketolase family. DXPS subfamily.</text>
</comment>